<comment type="function">
    <text evidence="1">An aminoacyl-tRNA editing enzyme that deacylates mischarged D-aminoacyl-tRNAs. Also deacylates mischarged glycyl-tRNA(Ala), protecting cells against glycine mischarging by AlaRS. Acts via tRNA-based rather than protein-based catalysis; rejects L-amino acids rather than detecting D-amino acids in the active site. By recycling D-aminoacyl-tRNA to D-amino acids and free tRNA molecules, this enzyme counteracts the toxicity associated with the formation of D-aminoacyl-tRNA entities in vivo and helps enforce protein L-homochirality.</text>
</comment>
<comment type="catalytic activity">
    <reaction evidence="1">
        <text>glycyl-tRNA(Ala) + H2O = tRNA(Ala) + glycine + H(+)</text>
        <dbReference type="Rhea" id="RHEA:53744"/>
        <dbReference type="Rhea" id="RHEA-COMP:9657"/>
        <dbReference type="Rhea" id="RHEA-COMP:13640"/>
        <dbReference type="ChEBI" id="CHEBI:15377"/>
        <dbReference type="ChEBI" id="CHEBI:15378"/>
        <dbReference type="ChEBI" id="CHEBI:57305"/>
        <dbReference type="ChEBI" id="CHEBI:78442"/>
        <dbReference type="ChEBI" id="CHEBI:78522"/>
        <dbReference type="EC" id="3.1.1.96"/>
    </reaction>
</comment>
<comment type="catalytic activity">
    <reaction evidence="1">
        <text>a D-aminoacyl-tRNA + H2O = a tRNA + a D-alpha-amino acid + H(+)</text>
        <dbReference type="Rhea" id="RHEA:13953"/>
        <dbReference type="Rhea" id="RHEA-COMP:10123"/>
        <dbReference type="Rhea" id="RHEA-COMP:10124"/>
        <dbReference type="ChEBI" id="CHEBI:15377"/>
        <dbReference type="ChEBI" id="CHEBI:15378"/>
        <dbReference type="ChEBI" id="CHEBI:59871"/>
        <dbReference type="ChEBI" id="CHEBI:78442"/>
        <dbReference type="ChEBI" id="CHEBI:79333"/>
        <dbReference type="EC" id="3.1.1.96"/>
    </reaction>
</comment>
<comment type="subunit">
    <text evidence="1">Homodimer.</text>
</comment>
<comment type="subcellular location">
    <subcellularLocation>
        <location evidence="1">Cytoplasm</location>
    </subcellularLocation>
</comment>
<comment type="domain">
    <text evidence="1">A Gly-cisPro motif from one monomer fits into the active site of the other monomer to allow specific chiral rejection of L-amino acids.</text>
</comment>
<comment type="similarity">
    <text evidence="1">Belongs to the DTD family.</text>
</comment>
<protein>
    <recommendedName>
        <fullName evidence="1">D-aminoacyl-tRNA deacylase</fullName>
        <shortName evidence="1">DTD</shortName>
        <ecNumber evidence="1">3.1.1.96</ecNumber>
    </recommendedName>
    <alternativeName>
        <fullName evidence="1">Gly-tRNA(Ala) deacylase</fullName>
    </alternativeName>
</protein>
<organism>
    <name type="scientific">Jannaschia sp. (strain CCS1)</name>
    <dbReference type="NCBI Taxonomy" id="290400"/>
    <lineage>
        <taxon>Bacteria</taxon>
        <taxon>Pseudomonadati</taxon>
        <taxon>Pseudomonadota</taxon>
        <taxon>Alphaproteobacteria</taxon>
        <taxon>Rhodobacterales</taxon>
        <taxon>Roseobacteraceae</taxon>
        <taxon>Jannaschia</taxon>
    </lineage>
</organism>
<feature type="chain" id="PRO_0000259287" description="D-aminoacyl-tRNA deacylase">
    <location>
        <begin position="1"/>
        <end position="147"/>
    </location>
</feature>
<feature type="short sequence motif" description="Gly-cisPro motif, important for rejection of L-amino acids" evidence="1">
    <location>
        <begin position="137"/>
        <end position="138"/>
    </location>
</feature>
<proteinExistence type="inferred from homology"/>
<dbReference type="EC" id="3.1.1.96" evidence="1"/>
<dbReference type="EMBL" id="CP000264">
    <property type="protein sequence ID" value="ABD55592.1"/>
    <property type="molecule type" value="Genomic_DNA"/>
</dbReference>
<dbReference type="RefSeq" id="WP_011455796.1">
    <property type="nucleotide sequence ID" value="NC_007802.1"/>
</dbReference>
<dbReference type="SMR" id="Q28NX0"/>
<dbReference type="STRING" id="290400.Jann_2675"/>
<dbReference type="KEGG" id="jan:Jann_2675"/>
<dbReference type="eggNOG" id="COG1490">
    <property type="taxonomic scope" value="Bacteria"/>
</dbReference>
<dbReference type="HOGENOM" id="CLU_076901_1_1_5"/>
<dbReference type="OrthoDB" id="9801395at2"/>
<dbReference type="Proteomes" id="UP000008326">
    <property type="component" value="Chromosome"/>
</dbReference>
<dbReference type="GO" id="GO:0005737">
    <property type="term" value="C:cytoplasm"/>
    <property type="evidence" value="ECO:0007669"/>
    <property type="project" value="UniProtKB-SubCell"/>
</dbReference>
<dbReference type="GO" id="GO:0051500">
    <property type="term" value="F:D-tyrosyl-tRNA(Tyr) deacylase activity"/>
    <property type="evidence" value="ECO:0007669"/>
    <property type="project" value="TreeGrafter"/>
</dbReference>
<dbReference type="GO" id="GO:0106026">
    <property type="term" value="F:Gly-tRNA(Ala) deacylase activity"/>
    <property type="evidence" value="ECO:0007669"/>
    <property type="project" value="UniProtKB-UniRule"/>
</dbReference>
<dbReference type="GO" id="GO:0043908">
    <property type="term" value="F:Ser(Gly)-tRNA(Ala) hydrolase activity"/>
    <property type="evidence" value="ECO:0007669"/>
    <property type="project" value="UniProtKB-UniRule"/>
</dbReference>
<dbReference type="GO" id="GO:0000049">
    <property type="term" value="F:tRNA binding"/>
    <property type="evidence" value="ECO:0007669"/>
    <property type="project" value="UniProtKB-UniRule"/>
</dbReference>
<dbReference type="GO" id="GO:0019478">
    <property type="term" value="P:D-amino acid catabolic process"/>
    <property type="evidence" value="ECO:0007669"/>
    <property type="project" value="UniProtKB-UniRule"/>
</dbReference>
<dbReference type="CDD" id="cd00563">
    <property type="entry name" value="Dtyr_deacylase"/>
    <property type="match status" value="1"/>
</dbReference>
<dbReference type="FunFam" id="3.50.80.10:FF:000001">
    <property type="entry name" value="D-aminoacyl-tRNA deacylase"/>
    <property type="match status" value="1"/>
</dbReference>
<dbReference type="Gene3D" id="3.50.80.10">
    <property type="entry name" value="D-tyrosyl-tRNA(Tyr) deacylase"/>
    <property type="match status" value="1"/>
</dbReference>
<dbReference type="HAMAP" id="MF_00518">
    <property type="entry name" value="Deacylase_Dtd"/>
    <property type="match status" value="1"/>
</dbReference>
<dbReference type="InterPro" id="IPR003732">
    <property type="entry name" value="Daa-tRNA_deacyls_DTD"/>
</dbReference>
<dbReference type="InterPro" id="IPR023509">
    <property type="entry name" value="DTD-like_sf"/>
</dbReference>
<dbReference type="NCBIfam" id="TIGR00256">
    <property type="entry name" value="D-aminoacyl-tRNA deacylase"/>
    <property type="match status" value="1"/>
</dbReference>
<dbReference type="PANTHER" id="PTHR10472:SF5">
    <property type="entry name" value="D-AMINOACYL-TRNA DEACYLASE 1"/>
    <property type="match status" value="1"/>
</dbReference>
<dbReference type="PANTHER" id="PTHR10472">
    <property type="entry name" value="D-TYROSYL-TRNA TYR DEACYLASE"/>
    <property type="match status" value="1"/>
</dbReference>
<dbReference type="Pfam" id="PF02580">
    <property type="entry name" value="Tyr_Deacylase"/>
    <property type="match status" value="1"/>
</dbReference>
<dbReference type="SUPFAM" id="SSF69500">
    <property type="entry name" value="DTD-like"/>
    <property type="match status" value="1"/>
</dbReference>
<keyword id="KW-0963">Cytoplasm</keyword>
<keyword id="KW-0378">Hydrolase</keyword>
<keyword id="KW-1185">Reference proteome</keyword>
<keyword id="KW-0694">RNA-binding</keyword>
<keyword id="KW-0820">tRNA-binding</keyword>
<sequence>MRALIQRVHNARVEVEGAIVGQTGPGLLILLCAMAGDTEAEAEKLITKITKLRIFKDEAGKMNRSLLDIGGGALVVSQFTLSADTSRGNRPGFSAAAPPQEGEALYLHAVDLLRGHGVATQTGQFGADMDVHLVNDGPVTIWMDTSA</sequence>
<evidence type="ECO:0000255" key="1">
    <source>
        <dbReference type="HAMAP-Rule" id="MF_00518"/>
    </source>
</evidence>
<gene>
    <name evidence="1" type="primary">dtd</name>
    <name type="ordered locus">Jann_2675</name>
</gene>
<reference key="1">
    <citation type="submission" date="2006-02" db="EMBL/GenBank/DDBJ databases">
        <title>Complete sequence of chromosome of Jannaschia sp. CCS1.</title>
        <authorList>
            <consortium name="US DOE Joint Genome Institute"/>
            <person name="Copeland A."/>
            <person name="Lucas S."/>
            <person name="Lapidus A."/>
            <person name="Barry K."/>
            <person name="Detter J.C."/>
            <person name="Glavina del Rio T."/>
            <person name="Hammon N."/>
            <person name="Israni S."/>
            <person name="Pitluck S."/>
            <person name="Brettin T."/>
            <person name="Bruce D."/>
            <person name="Han C."/>
            <person name="Tapia R."/>
            <person name="Gilna P."/>
            <person name="Chertkov O."/>
            <person name="Saunders E."/>
            <person name="Schmutz J."/>
            <person name="Larimer F."/>
            <person name="Land M."/>
            <person name="Kyrpides N."/>
            <person name="Lykidis A."/>
            <person name="Moran M.A."/>
            <person name="Belas R."/>
            <person name="Ye W."/>
            <person name="Buchan A."/>
            <person name="Gonzalez J.M."/>
            <person name="Schell M.A."/>
            <person name="Richardson P."/>
        </authorList>
    </citation>
    <scope>NUCLEOTIDE SEQUENCE [LARGE SCALE GENOMIC DNA]</scope>
    <source>
        <strain>CCS1</strain>
    </source>
</reference>
<name>DTD_JANSC</name>
<accession>Q28NX0</accession>